<name>AAAH_CHLPN</name>
<feature type="chain" id="PRO_0000205577" description="Probable aromatic amino acid hydroxylase">
    <location>
        <begin position="1"/>
        <end position="362"/>
    </location>
</feature>
<feature type="binding site" evidence="2">
    <location>
        <position position="200"/>
    </location>
    <ligand>
        <name>Fe cation</name>
        <dbReference type="ChEBI" id="CHEBI:24875"/>
    </ligand>
</feature>
<feature type="binding site" evidence="2">
    <location>
        <position position="205"/>
    </location>
    <ligand>
        <name>Fe cation</name>
        <dbReference type="ChEBI" id="CHEBI:24875"/>
    </ligand>
</feature>
<feature type="sequence conflict" description="In Ref. 4; AAP99015." evidence="3" ref="4">
    <original>E</original>
    <variation>D</variation>
    <location>
        <position position="131"/>
    </location>
</feature>
<protein>
    <recommendedName>
        <fullName>Probable aromatic amino acid hydroxylase</fullName>
        <ecNumber>1.14.16.-</ecNumber>
    </recommendedName>
</protein>
<evidence type="ECO:0000250" key="1"/>
<evidence type="ECO:0000255" key="2"/>
<evidence type="ECO:0000305" key="3"/>
<dbReference type="EC" id="1.14.16.-"/>
<dbReference type="EMBL" id="AE001363">
    <property type="protein sequence ID" value="AAD19183.1"/>
    <property type="molecule type" value="Genomic_DNA"/>
</dbReference>
<dbReference type="EMBL" id="AE002161">
    <property type="protein sequence ID" value="AAF73705.1"/>
    <property type="molecule type" value="Genomic_DNA"/>
</dbReference>
<dbReference type="EMBL" id="BA000008">
    <property type="protein sequence ID" value="BAA99253.1"/>
    <property type="molecule type" value="Genomic_DNA"/>
</dbReference>
<dbReference type="EMBL" id="AE009440">
    <property type="protein sequence ID" value="AAP99015.1"/>
    <property type="molecule type" value="Genomic_DNA"/>
</dbReference>
<dbReference type="PIR" id="C86621">
    <property type="entry name" value="C86621"/>
</dbReference>
<dbReference type="PIR" id="E72002">
    <property type="entry name" value="E72002"/>
</dbReference>
<dbReference type="RefSeq" id="NP_225240.1">
    <property type="nucleotide sequence ID" value="NC_000922.1"/>
</dbReference>
<dbReference type="RefSeq" id="WP_010883679.1">
    <property type="nucleotide sequence ID" value="NZ_LN847257.1"/>
</dbReference>
<dbReference type="SMR" id="Q9Z6L3"/>
<dbReference type="STRING" id="406984.CPK_ORF00473"/>
<dbReference type="GeneID" id="45051104"/>
<dbReference type="KEGG" id="cpa:CP_0806"/>
<dbReference type="KEGG" id="cpj:CPj1046"/>
<dbReference type="KEGG" id="cpn:CPn_1046"/>
<dbReference type="KEGG" id="cpt:CpB1086"/>
<dbReference type="PATRIC" id="fig|115713.3.peg.1145"/>
<dbReference type="eggNOG" id="COG3186">
    <property type="taxonomic scope" value="Bacteria"/>
</dbReference>
<dbReference type="HOGENOM" id="CLU_065322_0_0_0"/>
<dbReference type="OrthoDB" id="9780502at2"/>
<dbReference type="Proteomes" id="UP000000583">
    <property type="component" value="Chromosome"/>
</dbReference>
<dbReference type="Proteomes" id="UP000000801">
    <property type="component" value="Chromosome"/>
</dbReference>
<dbReference type="GO" id="GO:0005506">
    <property type="term" value="F:iron ion binding"/>
    <property type="evidence" value="ECO:0007669"/>
    <property type="project" value="InterPro"/>
</dbReference>
<dbReference type="GO" id="GO:0004505">
    <property type="term" value="F:phenylalanine 4-monooxygenase activity"/>
    <property type="evidence" value="ECO:0007669"/>
    <property type="project" value="UniProtKB-ARBA"/>
</dbReference>
<dbReference type="Gene3D" id="1.10.800.10">
    <property type="entry name" value="Aromatic amino acid hydroxylase"/>
    <property type="match status" value="1"/>
</dbReference>
<dbReference type="InterPro" id="IPR001273">
    <property type="entry name" value="ArAA_hydroxylase"/>
</dbReference>
<dbReference type="InterPro" id="IPR018301">
    <property type="entry name" value="ArAA_hydroxylase_Fe/CU_BS"/>
</dbReference>
<dbReference type="InterPro" id="IPR036951">
    <property type="entry name" value="ArAA_hydroxylase_sf"/>
</dbReference>
<dbReference type="InterPro" id="IPR036329">
    <property type="entry name" value="Aro-AA_hydroxylase_C_sf"/>
</dbReference>
<dbReference type="InterPro" id="IPR019774">
    <property type="entry name" value="Aromatic-AA_hydroxylase_C"/>
</dbReference>
<dbReference type="NCBIfam" id="NF010656">
    <property type="entry name" value="PRK14055.1"/>
    <property type="match status" value="1"/>
</dbReference>
<dbReference type="PANTHER" id="PTHR11473">
    <property type="entry name" value="AROMATIC AMINO ACID HYDROXYLASE"/>
    <property type="match status" value="1"/>
</dbReference>
<dbReference type="PANTHER" id="PTHR11473:SF24">
    <property type="entry name" value="PHENYLALANINE-4-HYDROXYLASE"/>
    <property type="match status" value="1"/>
</dbReference>
<dbReference type="Pfam" id="PF00351">
    <property type="entry name" value="Biopterin_H"/>
    <property type="match status" value="1"/>
</dbReference>
<dbReference type="PRINTS" id="PR00372">
    <property type="entry name" value="FYWHYDRXLASE"/>
</dbReference>
<dbReference type="SUPFAM" id="SSF56534">
    <property type="entry name" value="Aromatic aminoacid monoxygenases, catalytic and oligomerization domains"/>
    <property type="match status" value="1"/>
</dbReference>
<dbReference type="PROSITE" id="PS00367">
    <property type="entry name" value="BH4_AAA_HYDROXYL_1"/>
    <property type="match status" value="1"/>
</dbReference>
<dbReference type="PROSITE" id="PS51410">
    <property type="entry name" value="BH4_AAA_HYDROXYL_2"/>
    <property type="match status" value="1"/>
</dbReference>
<keyword id="KW-0408">Iron</keyword>
<keyword id="KW-0479">Metal-binding</keyword>
<keyword id="KW-0503">Monooxygenase</keyword>
<keyword id="KW-0560">Oxidoreductase</keyword>
<comment type="cofactor">
    <cofactor evidence="1">
        <name>Fe(2+)</name>
        <dbReference type="ChEBI" id="CHEBI:29033"/>
    </cofactor>
    <text evidence="1">Binds 1 Fe(2+) ion.</text>
</comment>
<comment type="similarity">
    <text evidence="3">Belongs to the biopterin-dependent aromatic amino acid hydroxylase family.</text>
</comment>
<sequence length="362" mass="42513">MHYCERTLDPKYILKIALKLRQSLSLFFQNSQSLQRAYSTPYSYYRIILQKENKEKQALARHKCISILEFFKNLLFVHLLSLSKNQREGCSTDMAVVSTPFFNRNLWYRLLSSRFSLWKSYCPRFFLDYLEAFGLLSDFLDHQAVIKFFELETHFSYYPVSGFVAPHQYLSLLQDRYFPIASVMRTLDKDNFSLTPDLIHDLLGHVPWLLHPSFSEFFINMGRLFTKVIEKVQALPSKKQRIQTLQSNLIAIVRCFWFTVESGLIENHEGRKAYGAVLISSPQELGHAFIDNVRVLPLELDQIIRLPFNTSTPQETLFSIRHFDELVELTSKLEWMLDQGLLESIPLYNQEKYLSGFEVLCQ</sequence>
<gene>
    <name type="ordered locus">CPn_1046</name>
    <name type="ordered locus">CP_0806</name>
    <name type="ordered locus">CPj1046</name>
    <name type="ordered locus">CpB1086</name>
</gene>
<proteinExistence type="inferred from homology"/>
<reference key="1">
    <citation type="journal article" date="1999" name="Nat. Genet.">
        <title>Comparative genomes of Chlamydia pneumoniae and C. trachomatis.</title>
        <authorList>
            <person name="Kalman S."/>
            <person name="Mitchell W.P."/>
            <person name="Marathe R."/>
            <person name="Lammel C.J."/>
            <person name="Fan J."/>
            <person name="Hyman R.W."/>
            <person name="Olinger L."/>
            <person name="Grimwood J."/>
            <person name="Davis R.W."/>
            <person name="Stephens R.S."/>
        </authorList>
    </citation>
    <scope>NUCLEOTIDE SEQUENCE [LARGE SCALE GENOMIC DNA]</scope>
    <source>
        <strain>CWL029</strain>
    </source>
</reference>
<reference key="2">
    <citation type="journal article" date="2000" name="Nucleic Acids Res.">
        <title>Genome sequences of Chlamydia trachomatis MoPn and Chlamydia pneumoniae AR39.</title>
        <authorList>
            <person name="Read T.D."/>
            <person name="Brunham R.C."/>
            <person name="Shen C."/>
            <person name="Gill S.R."/>
            <person name="Heidelberg J.F."/>
            <person name="White O."/>
            <person name="Hickey E.K."/>
            <person name="Peterson J.D."/>
            <person name="Utterback T.R."/>
            <person name="Berry K.J."/>
            <person name="Bass S."/>
            <person name="Linher K.D."/>
            <person name="Weidman J.F."/>
            <person name="Khouri H.M."/>
            <person name="Craven B."/>
            <person name="Bowman C."/>
            <person name="Dodson R.J."/>
            <person name="Gwinn M.L."/>
            <person name="Nelson W.C."/>
            <person name="DeBoy R.T."/>
            <person name="Kolonay J.F."/>
            <person name="McClarty G."/>
            <person name="Salzberg S.L."/>
            <person name="Eisen J.A."/>
            <person name="Fraser C.M."/>
        </authorList>
    </citation>
    <scope>NUCLEOTIDE SEQUENCE [LARGE SCALE GENOMIC DNA]</scope>
    <source>
        <strain>AR39</strain>
    </source>
</reference>
<reference key="3">
    <citation type="journal article" date="2000" name="Nucleic Acids Res.">
        <title>Comparison of whole genome sequences of Chlamydia pneumoniae J138 from Japan and CWL029 from USA.</title>
        <authorList>
            <person name="Shirai M."/>
            <person name="Hirakawa H."/>
            <person name="Kimoto M."/>
            <person name="Tabuchi M."/>
            <person name="Kishi F."/>
            <person name="Ouchi K."/>
            <person name="Shiba T."/>
            <person name="Ishii K."/>
            <person name="Hattori M."/>
            <person name="Kuhara S."/>
            <person name="Nakazawa T."/>
        </authorList>
    </citation>
    <scope>NUCLEOTIDE SEQUENCE [LARGE SCALE GENOMIC DNA]</scope>
    <source>
        <strain>J138</strain>
    </source>
</reference>
<reference key="4">
    <citation type="submission" date="2002-05" db="EMBL/GenBank/DDBJ databases">
        <title>The genome sequence of Chlamydia pneumoniae TW183 and comparison with other Chlamydia strains based on whole genome sequence analysis.</title>
        <authorList>
            <person name="Geng M.M."/>
            <person name="Schuhmacher A."/>
            <person name="Muehldorfer I."/>
            <person name="Bensch K.W."/>
            <person name="Schaefer K.P."/>
            <person name="Schneider S."/>
            <person name="Pohl T."/>
            <person name="Essig A."/>
            <person name="Marre R."/>
            <person name="Melchers K."/>
        </authorList>
    </citation>
    <scope>NUCLEOTIDE SEQUENCE [LARGE SCALE GENOMIC DNA]</scope>
    <source>
        <strain>TW-183</strain>
    </source>
</reference>
<accession>Q9Z6L3</accession>
<organism>
    <name type="scientific">Chlamydia pneumoniae</name>
    <name type="common">Chlamydophila pneumoniae</name>
    <dbReference type="NCBI Taxonomy" id="83558"/>
    <lineage>
        <taxon>Bacteria</taxon>
        <taxon>Pseudomonadati</taxon>
        <taxon>Chlamydiota</taxon>
        <taxon>Chlamydiia</taxon>
        <taxon>Chlamydiales</taxon>
        <taxon>Chlamydiaceae</taxon>
        <taxon>Chlamydia/Chlamydophila group</taxon>
        <taxon>Chlamydia</taxon>
    </lineage>
</organism>